<protein>
    <recommendedName>
        <fullName evidence="1">Alanine--tRNA ligase</fullName>
        <ecNumber evidence="1">6.1.1.7</ecNumber>
    </recommendedName>
    <alternativeName>
        <fullName evidence="1">Alanyl-tRNA synthetase</fullName>
        <shortName evidence="1">AlaRS</shortName>
    </alternativeName>
</protein>
<proteinExistence type="inferred from homology"/>
<accession>Q5FLW6</accession>
<sequence>MKKLNSSEFRQMFLDFFKEHGHMIMPSASLIPQDDPTLLWINSGVATMKKYFDGSVVPKNRRITSSQKSIRTNDIENVGKTARHQTFFEMLGNFSVGDYFRDEAIPWAWEFLTSPKWLGLPKEKLYCTVYPKDEDSFNVWVKAGMPADHIVKLEDNFWDIGEGPCGPDTEIFYDRGQENNDVAEDDPENFPGGENARYLEIWNIVFSQYNHLPNGKYVDQPHKNIDTGMGLERVLSILQDAPTNFETDLFLPIIHATEEMTDGKKYGENDEDTTAFKIIADHVRAVSFAIADGALPSNSGRGYVLRRLIRRADLNGQRLGIKGAFLYKLVPVVGKIMESHYPEIMDQRGFIENVIQNEEERFQSTLDTGLTLLDDLIEKAKNSDDKTISGKDAFKMFDTYGFPYELTFESAQDAGLKVDKKGFDAEMQAQKDRARKARGDLQSMGRQDVTLMNIKDKSEFEYGVYEEPHAKLIDIVVDDKLVDKANGEHATLVFDKTPFYAERGGQVADHGGIYNQDGELVAKVTDVQHAPNDQNLHFVDLILPMEKGQEYVLKIDKERREGLRHSHSATHLLHAALRQVLGEHTHQAGSLVDPDYLRFDFTAMEPMTPRELKSVEELVNQKIWDAIQVKTTITTPEEGEKMGALALFDGKYGDKVRVVQMSDFSSEFCGGTHVDNTDQIGIFKITSESAVGAGMRRIEAVTSKKAYEYLANRSSLLDDIQEVVKATKPENIVDKIDSIENELRDSQKQVEALTKKINQAKAGEIFDNVKQAGDLTVIAAIADVNGMNDLRELADNWKSGNKSDVLVLAAENDGKANMIISLDQRALDKGLKAGDLIKKAAPLFGGGGGGRPNMAQAGGKKPEGLNDAIKAVIDEISNN</sequence>
<reference key="1">
    <citation type="journal article" date="2005" name="Proc. Natl. Acad. Sci. U.S.A.">
        <title>Complete genome sequence of the probiotic lactic acid bacterium Lactobacillus acidophilus NCFM.</title>
        <authorList>
            <person name="Altermann E."/>
            <person name="Russell W.M."/>
            <person name="Azcarate-Peril M.A."/>
            <person name="Barrangou R."/>
            <person name="Buck B.L."/>
            <person name="McAuliffe O."/>
            <person name="Souther N."/>
            <person name="Dobson A."/>
            <person name="Duong T."/>
            <person name="Callanan M."/>
            <person name="Lick S."/>
            <person name="Hamrick A."/>
            <person name="Cano R."/>
            <person name="Klaenhammer T.R."/>
        </authorList>
    </citation>
    <scope>NUCLEOTIDE SEQUENCE [LARGE SCALE GENOMIC DNA]</scope>
    <source>
        <strain>ATCC 700396 / NCK56 / N2 / NCFM</strain>
    </source>
</reference>
<dbReference type="EC" id="6.1.1.7" evidence="1"/>
<dbReference type="EMBL" id="CP000033">
    <property type="protein sequence ID" value="AAV42308.1"/>
    <property type="molecule type" value="Genomic_DNA"/>
</dbReference>
<dbReference type="RefSeq" id="WP_003549179.1">
    <property type="nucleotide sequence ID" value="NC_006814.3"/>
</dbReference>
<dbReference type="RefSeq" id="YP_193339.1">
    <property type="nucleotide sequence ID" value="NC_006814.3"/>
</dbReference>
<dbReference type="SMR" id="Q5FLW6"/>
<dbReference type="STRING" id="272621.LBA0417"/>
<dbReference type="GeneID" id="93290484"/>
<dbReference type="KEGG" id="lac:LBA0417"/>
<dbReference type="PATRIC" id="fig|272621.13.peg.402"/>
<dbReference type="eggNOG" id="COG0013">
    <property type="taxonomic scope" value="Bacteria"/>
</dbReference>
<dbReference type="HOGENOM" id="CLU_004485_1_1_9"/>
<dbReference type="OrthoDB" id="9803884at2"/>
<dbReference type="BioCyc" id="LACI272621:G1G49-411-MONOMER"/>
<dbReference type="Proteomes" id="UP000006381">
    <property type="component" value="Chromosome"/>
</dbReference>
<dbReference type="GO" id="GO:0005829">
    <property type="term" value="C:cytosol"/>
    <property type="evidence" value="ECO:0007669"/>
    <property type="project" value="TreeGrafter"/>
</dbReference>
<dbReference type="GO" id="GO:0004813">
    <property type="term" value="F:alanine-tRNA ligase activity"/>
    <property type="evidence" value="ECO:0007669"/>
    <property type="project" value="UniProtKB-UniRule"/>
</dbReference>
<dbReference type="GO" id="GO:0002161">
    <property type="term" value="F:aminoacyl-tRNA deacylase activity"/>
    <property type="evidence" value="ECO:0007669"/>
    <property type="project" value="TreeGrafter"/>
</dbReference>
<dbReference type="GO" id="GO:0005524">
    <property type="term" value="F:ATP binding"/>
    <property type="evidence" value="ECO:0007669"/>
    <property type="project" value="UniProtKB-UniRule"/>
</dbReference>
<dbReference type="GO" id="GO:0140096">
    <property type="term" value="F:catalytic activity, acting on a protein"/>
    <property type="evidence" value="ECO:0007669"/>
    <property type="project" value="UniProtKB-ARBA"/>
</dbReference>
<dbReference type="GO" id="GO:0016740">
    <property type="term" value="F:transferase activity"/>
    <property type="evidence" value="ECO:0007669"/>
    <property type="project" value="UniProtKB-ARBA"/>
</dbReference>
<dbReference type="GO" id="GO:0000049">
    <property type="term" value="F:tRNA binding"/>
    <property type="evidence" value="ECO:0007669"/>
    <property type="project" value="UniProtKB-KW"/>
</dbReference>
<dbReference type="GO" id="GO:0008270">
    <property type="term" value="F:zinc ion binding"/>
    <property type="evidence" value="ECO:0007669"/>
    <property type="project" value="UniProtKB-UniRule"/>
</dbReference>
<dbReference type="GO" id="GO:0006419">
    <property type="term" value="P:alanyl-tRNA aminoacylation"/>
    <property type="evidence" value="ECO:0007669"/>
    <property type="project" value="UniProtKB-UniRule"/>
</dbReference>
<dbReference type="CDD" id="cd00673">
    <property type="entry name" value="AlaRS_core"/>
    <property type="match status" value="1"/>
</dbReference>
<dbReference type="FunFam" id="3.10.310.40:FF:000001">
    <property type="entry name" value="Alanine--tRNA ligase"/>
    <property type="match status" value="1"/>
</dbReference>
<dbReference type="FunFam" id="3.30.54.20:FF:000001">
    <property type="entry name" value="Alanine--tRNA ligase"/>
    <property type="match status" value="1"/>
</dbReference>
<dbReference type="FunFam" id="3.30.930.10:FF:000046">
    <property type="entry name" value="Alanine--tRNA ligase"/>
    <property type="match status" value="1"/>
</dbReference>
<dbReference type="FunFam" id="3.30.980.10:FF:000004">
    <property type="entry name" value="Alanine--tRNA ligase, cytoplasmic"/>
    <property type="match status" value="1"/>
</dbReference>
<dbReference type="Gene3D" id="2.40.30.130">
    <property type="match status" value="1"/>
</dbReference>
<dbReference type="Gene3D" id="3.10.310.40">
    <property type="match status" value="1"/>
</dbReference>
<dbReference type="Gene3D" id="3.30.54.20">
    <property type="match status" value="1"/>
</dbReference>
<dbReference type="Gene3D" id="6.10.250.550">
    <property type="match status" value="1"/>
</dbReference>
<dbReference type="Gene3D" id="3.30.930.10">
    <property type="entry name" value="Bira Bifunctional Protein, Domain 2"/>
    <property type="match status" value="1"/>
</dbReference>
<dbReference type="Gene3D" id="3.30.980.10">
    <property type="entry name" value="Threonyl-trna Synthetase, Chain A, domain 2"/>
    <property type="match status" value="1"/>
</dbReference>
<dbReference type="HAMAP" id="MF_00036_B">
    <property type="entry name" value="Ala_tRNA_synth_B"/>
    <property type="match status" value="1"/>
</dbReference>
<dbReference type="InterPro" id="IPR045864">
    <property type="entry name" value="aa-tRNA-synth_II/BPL/LPL"/>
</dbReference>
<dbReference type="InterPro" id="IPR002318">
    <property type="entry name" value="Ala-tRNA-lgiase_IIc"/>
</dbReference>
<dbReference type="InterPro" id="IPR018162">
    <property type="entry name" value="Ala-tRNA-ligase_IIc_anticod-bd"/>
</dbReference>
<dbReference type="InterPro" id="IPR018165">
    <property type="entry name" value="Ala-tRNA-synth_IIc_core"/>
</dbReference>
<dbReference type="InterPro" id="IPR018164">
    <property type="entry name" value="Ala-tRNA-synth_IIc_N"/>
</dbReference>
<dbReference type="InterPro" id="IPR050058">
    <property type="entry name" value="Ala-tRNA_ligase"/>
</dbReference>
<dbReference type="InterPro" id="IPR023033">
    <property type="entry name" value="Ala_tRNA_ligase_euk/bac"/>
</dbReference>
<dbReference type="InterPro" id="IPR003156">
    <property type="entry name" value="DHHA1_dom"/>
</dbReference>
<dbReference type="InterPro" id="IPR018163">
    <property type="entry name" value="Thr/Ala-tRNA-synth_IIc_edit"/>
</dbReference>
<dbReference type="InterPro" id="IPR009000">
    <property type="entry name" value="Transl_B-barrel_sf"/>
</dbReference>
<dbReference type="InterPro" id="IPR012947">
    <property type="entry name" value="tRNA_SAD"/>
</dbReference>
<dbReference type="NCBIfam" id="TIGR00344">
    <property type="entry name" value="alaS"/>
    <property type="match status" value="1"/>
</dbReference>
<dbReference type="PANTHER" id="PTHR11777:SF9">
    <property type="entry name" value="ALANINE--TRNA LIGASE, CYTOPLASMIC"/>
    <property type="match status" value="1"/>
</dbReference>
<dbReference type="PANTHER" id="PTHR11777">
    <property type="entry name" value="ALANYL-TRNA SYNTHETASE"/>
    <property type="match status" value="1"/>
</dbReference>
<dbReference type="Pfam" id="PF02272">
    <property type="entry name" value="DHHA1"/>
    <property type="match status" value="1"/>
</dbReference>
<dbReference type="Pfam" id="PF01411">
    <property type="entry name" value="tRNA-synt_2c"/>
    <property type="match status" value="1"/>
</dbReference>
<dbReference type="Pfam" id="PF07973">
    <property type="entry name" value="tRNA_SAD"/>
    <property type="match status" value="1"/>
</dbReference>
<dbReference type="PRINTS" id="PR00980">
    <property type="entry name" value="TRNASYNTHALA"/>
</dbReference>
<dbReference type="SMART" id="SM00863">
    <property type="entry name" value="tRNA_SAD"/>
    <property type="match status" value="1"/>
</dbReference>
<dbReference type="SUPFAM" id="SSF55681">
    <property type="entry name" value="Class II aaRS and biotin synthetases"/>
    <property type="match status" value="1"/>
</dbReference>
<dbReference type="SUPFAM" id="SSF101353">
    <property type="entry name" value="Putative anticodon-binding domain of alanyl-tRNA synthetase (AlaRS)"/>
    <property type="match status" value="1"/>
</dbReference>
<dbReference type="SUPFAM" id="SSF55186">
    <property type="entry name" value="ThrRS/AlaRS common domain"/>
    <property type="match status" value="1"/>
</dbReference>
<dbReference type="SUPFAM" id="SSF50447">
    <property type="entry name" value="Translation proteins"/>
    <property type="match status" value="1"/>
</dbReference>
<dbReference type="PROSITE" id="PS50860">
    <property type="entry name" value="AA_TRNA_LIGASE_II_ALA"/>
    <property type="match status" value="1"/>
</dbReference>
<name>SYA_LACAC</name>
<keyword id="KW-0030">Aminoacyl-tRNA synthetase</keyword>
<keyword id="KW-0067">ATP-binding</keyword>
<keyword id="KW-0963">Cytoplasm</keyword>
<keyword id="KW-0436">Ligase</keyword>
<keyword id="KW-0479">Metal-binding</keyword>
<keyword id="KW-0547">Nucleotide-binding</keyword>
<keyword id="KW-0648">Protein biosynthesis</keyword>
<keyword id="KW-1185">Reference proteome</keyword>
<keyword id="KW-0694">RNA-binding</keyword>
<keyword id="KW-0820">tRNA-binding</keyword>
<keyword id="KW-0862">Zinc</keyword>
<feature type="chain" id="PRO_0000075128" description="Alanine--tRNA ligase">
    <location>
        <begin position="1"/>
        <end position="879"/>
    </location>
</feature>
<feature type="binding site" evidence="1">
    <location>
        <position position="567"/>
    </location>
    <ligand>
        <name>Zn(2+)</name>
        <dbReference type="ChEBI" id="CHEBI:29105"/>
    </ligand>
</feature>
<feature type="binding site" evidence="1">
    <location>
        <position position="571"/>
    </location>
    <ligand>
        <name>Zn(2+)</name>
        <dbReference type="ChEBI" id="CHEBI:29105"/>
    </ligand>
</feature>
<feature type="binding site" evidence="1">
    <location>
        <position position="669"/>
    </location>
    <ligand>
        <name>Zn(2+)</name>
        <dbReference type="ChEBI" id="CHEBI:29105"/>
    </ligand>
</feature>
<feature type="binding site" evidence="1">
    <location>
        <position position="673"/>
    </location>
    <ligand>
        <name>Zn(2+)</name>
        <dbReference type="ChEBI" id="CHEBI:29105"/>
    </ligand>
</feature>
<gene>
    <name evidence="1" type="primary">alaS</name>
    <name type="ordered locus">LBA0417</name>
</gene>
<organism>
    <name type="scientific">Lactobacillus acidophilus (strain ATCC 700396 / NCK56 / N2 / NCFM)</name>
    <dbReference type="NCBI Taxonomy" id="272621"/>
    <lineage>
        <taxon>Bacteria</taxon>
        <taxon>Bacillati</taxon>
        <taxon>Bacillota</taxon>
        <taxon>Bacilli</taxon>
        <taxon>Lactobacillales</taxon>
        <taxon>Lactobacillaceae</taxon>
        <taxon>Lactobacillus</taxon>
    </lineage>
</organism>
<evidence type="ECO:0000255" key="1">
    <source>
        <dbReference type="HAMAP-Rule" id="MF_00036"/>
    </source>
</evidence>
<comment type="function">
    <text evidence="1">Catalyzes the attachment of alanine to tRNA(Ala) in a two-step reaction: alanine is first activated by ATP to form Ala-AMP and then transferred to the acceptor end of tRNA(Ala). Also edits incorrectly charged Ser-tRNA(Ala) and Gly-tRNA(Ala) via its editing domain.</text>
</comment>
<comment type="catalytic activity">
    <reaction evidence="1">
        <text>tRNA(Ala) + L-alanine + ATP = L-alanyl-tRNA(Ala) + AMP + diphosphate</text>
        <dbReference type="Rhea" id="RHEA:12540"/>
        <dbReference type="Rhea" id="RHEA-COMP:9657"/>
        <dbReference type="Rhea" id="RHEA-COMP:9923"/>
        <dbReference type="ChEBI" id="CHEBI:30616"/>
        <dbReference type="ChEBI" id="CHEBI:33019"/>
        <dbReference type="ChEBI" id="CHEBI:57972"/>
        <dbReference type="ChEBI" id="CHEBI:78442"/>
        <dbReference type="ChEBI" id="CHEBI:78497"/>
        <dbReference type="ChEBI" id="CHEBI:456215"/>
        <dbReference type="EC" id="6.1.1.7"/>
    </reaction>
</comment>
<comment type="cofactor">
    <cofactor evidence="1">
        <name>Zn(2+)</name>
        <dbReference type="ChEBI" id="CHEBI:29105"/>
    </cofactor>
    <text evidence="1">Binds 1 zinc ion per subunit.</text>
</comment>
<comment type="subcellular location">
    <subcellularLocation>
        <location evidence="1">Cytoplasm</location>
    </subcellularLocation>
</comment>
<comment type="domain">
    <text evidence="1">Consists of three domains; the N-terminal catalytic domain, the editing domain and the C-terminal C-Ala domain. The editing domain removes incorrectly charged amino acids, while the C-Ala domain, along with tRNA(Ala), serves as a bridge to cooperatively bring together the editing and aminoacylation centers thus stimulating deacylation of misacylated tRNAs.</text>
</comment>
<comment type="similarity">
    <text evidence="1">Belongs to the class-II aminoacyl-tRNA synthetase family.</text>
</comment>